<comment type="function">
    <text evidence="1">Catalyzes the initial step of the lipid cycle reactions in the biosynthesis of the cell wall peptidoglycan: transfers peptidoglycan precursor phospho-MurNAc-pentapeptide from UDP-MurNAc-pentapeptide onto the lipid carrier undecaprenyl phosphate, yielding undecaprenyl-pyrophosphoryl-MurNAc-pentapeptide, known as lipid I.</text>
</comment>
<comment type="catalytic activity">
    <reaction evidence="1">
        <text>UDP-N-acetyl-alpha-D-muramoyl-L-alanyl-gamma-D-glutamyl-meso-2,6-diaminopimeloyl-D-alanyl-D-alanine + di-trans,octa-cis-undecaprenyl phosphate = di-trans,octa-cis-undecaprenyl diphospho-N-acetyl-alpha-D-muramoyl-L-alanyl-D-glutamyl-meso-2,6-diaminopimeloyl-D-alanyl-D-alanine + UMP</text>
        <dbReference type="Rhea" id="RHEA:28386"/>
        <dbReference type="ChEBI" id="CHEBI:57865"/>
        <dbReference type="ChEBI" id="CHEBI:60392"/>
        <dbReference type="ChEBI" id="CHEBI:61386"/>
        <dbReference type="ChEBI" id="CHEBI:61387"/>
        <dbReference type="EC" id="2.7.8.13"/>
    </reaction>
</comment>
<comment type="cofactor">
    <cofactor evidence="1">
        <name>Mg(2+)</name>
        <dbReference type="ChEBI" id="CHEBI:18420"/>
    </cofactor>
</comment>
<comment type="pathway">
    <text evidence="1">Cell wall biogenesis; peptidoglycan biosynthesis.</text>
</comment>
<comment type="subcellular location">
    <subcellularLocation>
        <location evidence="1">Cell inner membrane</location>
        <topology evidence="1">Multi-pass membrane protein</topology>
    </subcellularLocation>
</comment>
<comment type="similarity">
    <text evidence="1">Belongs to the glycosyltransferase 4 family. MraY subfamily.</text>
</comment>
<accession>B5ELC6</accession>
<sequence>MLYALFMQLGSLYHGFYVFQYLTLRGVLATLTALVLSLFIGPFFIARLRRYKIGQMVRNDGPETHLIKQGTPTMGGALILLVVILTTLLWSDLGNPLVWVAVLTTLAFGAIGFVDDWRKLRRQNSKGLSARAKYGLQSLVAFAAGGVLYALASNPVETSLILPFIPHVLIPMGAGFIVFSYFVIVGTSNAVNLTDGLDGLAIVPTVMVAGALGVFAYVSGNAVFARYLDVPWVPGSGQMLIFCGALVGAGLGFLWFNTYPADVFMGDTGALALGAALAIVAIVARQELVLFIMGGVFVVETLSVIIQVVSFRLTGKRVFRMAPLHHHFEKKGWPEPRVAVRFWIITVILVLVGLSSLKIR</sequence>
<name>MRAY_ACIF5</name>
<feature type="chain" id="PRO_1000090583" description="Phospho-N-acetylmuramoyl-pentapeptide-transferase">
    <location>
        <begin position="1"/>
        <end position="360"/>
    </location>
</feature>
<feature type="transmembrane region" description="Helical" evidence="1">
    <location>
        <begin position="26"/>
        <end position="46"/>
    </location>
</feature>
<feature type="transmembrane region" description="Helical" evidence="1">
    <location>
        <begin position="70"/>
        <end position="90"/>
    </location>
</feature>
<feature type="transmembrane region" description="Helical" evidence="1">
    <location>
        <begin position="94"/>
        <end position="114"/>
    </location>
</feature>
<feature type="transmembrane region" description="Helical" evidence="1">
    <location>
        <begin position="136"/>
        <end position="156"/>
    </location>
</feature>
<feature type="transmembrane region" description="Helical" evidence="1">
    <location>
        <begin position="164"/>
        <end position="184"/>
    </location>
</feature>
<feature type="transmembrane region" description="Helical" evidence="1">
    <location>
        <begin position="199"/>
        <end position="219"/>
    </location>
</feature>
<feature type="transmembrane region" description="Helical" evidence="1">
    <location>
        <begin position="236"/>
        <end position="256"/>
    </location>
</feature>
<feature type="transmembrane region" description="Helical" evidence="1">
    <location>
        <begin position="263"/>
        <end position="283"/>
    </location>
</feature>
<feature type="transmembrane region" description="Helical" evidence="1">
    <location>
        <begin position="289"/>
        <end position="309"/>
    </location>
</feature>
<feature type="transmembrane region" description="Helical" evidence="1">
    <location>
        <begin position="339"/>
        <end position="359"/>
    </location>
</feature>
<protein>
    <recommendedName>
        <fullName evidence="1">Phospho-N-acetylmuramoyl-pentapeptide-transferase</fullName>
        <ecNumber evidence="1">2.7.8.13</ecNumber>
    </recommendedName>
    <alternativeName>
        <fullName evidence="1">UDP-MurNAc-pentapeptide phosphotransferase</fullName>
    </alternativeName>
</protein>
<keyword id="KW-0131">Cell cycle</keyword>
<keyword id="KW-0132">Cell division</keyword>
<keyword id="KW-0997">Cell inner membrane</keyword>
<keyword id="KW-1003">Cell membrane</keyword>
<keyword id="KW-0133">Cell shape</keyword>
<keyword id="KW-0961">Cell wall biogenesis/degradation</keyword>
<keyword id="KW-0460">Magnesium</keyword>
<keyword id="KW-0472">Membrane</keyword>
<keyword id="KW-0479">Metal-binding</keyword>
<keyword id="KW-0573">Peptidoglycan synthesis</keyword>
<keyword id="KW-0808">Transferase</keyword>
<keyword id="KW-0812">Transmembrane</keyword>
<keyword id="KW-1133">Transmembrane helix</keyword>
<proteinExistence type="inferred from homology"/>
<evidence type="ECO:0000255" key="1">
    <source>
        <dbReference type="HAMAP-Rule" id="MF_00038"/>
    </source>
</evidence>
<reference key="1">
    <citation type="submission" date="2008-08" db="EMBL/GenBank/DDBJ databases">
        <title>Complete sequence of Acidithiobacillus ferrooxidans ATCC 53993.</title>
        <authorList>
            <person name="Lucas S."/>
            <person name="Copeland A."/>
            <person name="Lapidus A."/>
            <person name="Glavina del Rio T."/>
            <person name="Dalin E."/>
            <person name="Tice H."/>
            <person name="Bruce D."/>
            <person name="Goodwin L."/>
            <person name="Pitluck S."/>
            <person name="Sims D."/>
            <person name="Brettin T."/>
            <person name="Detter J.C."/>
            <person name="Han C."/>
            <person name="Kuske C.R."/>
            <person name="Larimer F."/>
            <person name="Land M."/>
            <person name="Hauser L."/>
            <person name="Kyrpides N."/>
            <person name="Lykidis A."/>
            <person name="Borole A.P."/>
        </authorList>
    </citation>
    <scope>NUCLEOTIDE SEQUENCE [LARGE SCALE GENOMIC DNA]</scope>
    <source>
        <strain>ATCC 53993 / BNL-5-31</strain>
    </source>
</reference>
<gene>
    <name evidence="1" type="primary">mraY</name>
    <name type="ordered locus">Lferr_0388</name>
</gene>
<dbReference type="EC" id="2.7.8.13" evidence="1"/>
<dbReference type="EMBL" id="CP001132">
    <property type="protein sequence ID" value="ACH82642.1"/>
    <property type="molecule type" value="Genomic_DNA"/>
</dbReference>
<dbReference type="RefSeq" id="WP_009567102.1">
    <property type="nucleotide sequence ID" value="NC_011206.1"/>
</dbReference>
<dbReference type="SMR" id="B5ELC6"/>
<dbReference type="GeneID" id="65279594"/>
<dbReference type="KEGG" id="afe:Lferr_0388"/>
<dbReference type="eggNOG" id="COG0472">
    <property type="taxonomic scope" value="Bacteria"/>
</dbReference>
<dbReference type="HOGENOM" id="CLU_023982_0_0_6"/>
<dbReference type="UniPathway" id="UPA00219"/>
<dbReference type="GO" id="GO:0005886">
    <property type="term" value="C:plasma membrane"/>
    <property type="evidence" value="ECO:0007669"/>
    <property type="project" value="UniProtKB-SubCell"/>
</dbReference>
<dbReference type="GO" id="GO:0046872">
    <property type="term" value="F:metal ion binding"/>
    <property type="evidence" value="ECO:0007669"/>
    <property type="project" value="UniProtKB-KW"/>
</dbReference>
<dbReference type="GO" id="GO:0008963">
    <property type="term" value="F:phospho-N-acetylmuramoyl-pentapeptide-transferase activity"/>
    <property type="evidence" value="ECO:0007669"/>
    <property type="project" value="UniProtKB-UniRule"/>
</dbReference>
<dbReference type="GO" id="GO:0051992">
    <property type="term" value="F:UDP-N-acetylmuramoyl-L-alanyl-D-glutamyl-meso-2,6-diaminopimelyl-D-alanyl-D-alanine:undecaprenyl-phosphate transferase activity"/>
    <property type="evidence" value="ECO:0007669"/>
    <property type="project" value="RHEA"/>
</dbReference>
<dbReference type="GO" id="GO:0051301">
    <property type="term" value="P:cell division"/>
    <property type="evidence" value="ECO:0007669"/>
    <property type="project" value="UniProtKB-KW"/>
</dbReference>
<dbReference type="GO" id="GO:0071555">
    <property type="term" value="P:cell wall organization"/>
    <property type="evidence" value="ECO:0007669"/>
    <property type="project" value="UniProtKB-KW"/>
</dbReference>
<dbReference type="GO" id="GO:0009252">
    <property type="term" value="P:peptidoglycan biosynthetic process"/>
    <property type="evidence" value="ECO:0007669"/>
    <property type="project" value="UniProtKB-UniRule"/>
</dbReference>
<dbReference type="GO" id="GO:0008360">
    <property type="term" value="P:regulation of cell shape"/>
    <property type="evidence" value="ECO:0007669"/>
    <property type="project" value="UniProtKB-KW"/>
</dbReference>
<dbReference type="CDD" id="cd06852">
    <property type="entry name" value="GT_MraY"/>
    <property type="match status" value="1"/>
</dbReference>
<dbReference type="HAMAP" id="MF_00038">
    <property type="entry name" value="MraY"/>
    <property type="match status" value="1"/>
</dbReference>
<dbReference type="InterPro" id="IPR000715">
    <property type="entry name" value="Glycosyl_transferase_4"/>
</dbReference>
<dbReference type="InterPro" id="IPR003524">
    <property type="entry name" value="PNAcMuramoyl-5peptid_Trfase"/>
</dbReference>
<dbReference type="InterPro" id="IPR018480">
    <property type="entry name" value="PNAcMuramoyl-5peptid_Trfase_CS"/>
</dbReference>
<dbReference type="NCBIfam" id="TIGR00445">
    <property type="entry name" value="mraY"/>
    <property type="match status" value="1"/>
</dbReference>
<dbReference type="PANTHER" id="PTHR22926">
    <property type="entry name" value="PHOSPHO-N-ACETYLMURAMOYL-PENTAPEPTIDE-TRANSFERASE"/>
    <property type="match status" value="1"/>
</dbReference>
<dbReference type="PANTHER" id="PTHR22926:SF5">
    <property type="entry name" value="PHOSPHO-N-ACETYLMURAMOYL-PENTAPEPTIDE-TRANSFERASE HOMOLOG"/>
    <property type="match status" value="1"/>
</dbReference>
<dbReference type="Pfam" id="PF00953">
    <property type="entry name" value="Glycos_transf_4"/>
    <property type="match status" value="1"/>
</dbReference>
<dbReference type="PROSITE" id="PS01347">
    <property type="entry name" value="MRAY_1"/>
    <property type="match status" value="1"/>
</dbReference>
<dbReference type="PROSITE" id="PS01348">
    <property type="entry name" value="MRAY_2"/>
    <property type="match status" value="1"/>
</dbReference>
<organism>
    <name type="scientific">Acidithiobacillus ferrooxidans (strain ATCC 53993 / BNL-5-31)</name>
    <name type="common">Leptospirillum ferrooxidans (ATCC 53993)</name>
    <dbReference type="NCBI Taxonomy" id="380394"/>
    <lineage>
        <taxon>Bacteria</taxon>
        <taxon>Pseudomonadati</taxon>
        <taxon>Pseudomonadota</taxon>
        <taxon>Acidithiobacillia</taxon>
        <taxon>Acidithiobacillales</taxon>
        <taxon>Acidithiobacillaceae</taxon>
        <taxon>Acidithiobacillus</taxon>
    </lineage>
</organism>